<comment type="function">
    <text evidence="1">Involved in urease metallocenter assembly. Binds nickel. Probably functions as a nickel donor during metallocenter assembly.</text>
</comment>
<comment type="subcellular location">
    <subcellularLocation>
        <location evidence="1">Cytoplasm</location>
    </subcellularLocation>
</comment>
<comment type="similarity">
    <text evidence="1">Belongs to the UreE family.</text>
</comment>
<gene>
    <name evidence="1" type="primary">ureE</name>
    <name type="ordered locus">YPN_1152</name>
    <name type="ORF">YP516_1262</name>
</gene>
<evidence type="ECO:0000255" key="1">
    <source>
        <dbReference type="HAMAP-Rule" id="MF_00822"/>
    </source>
</evidence>
<evidence type="ECO:0000256" key="2">
    <source>
        <dbReference type="SAM" id="MobiDB-lite"/>
    </source>
</evidence>
<name>UREE_YERPN</name>
<proteinExistence type="inferred from homology"/>
<protein>
    <recommendedName>
        <fullName evidence="1">Urease accessory protein UreE</fullName>
    </recommendedName>
</protein>
<dbReference type="EMBL" id="CP000305">
    <property type="protein sequence ID" value="ABG17482.1"/>
    <property type="molecule type" value="Genomic_DNA"/>
</dbReference>
<dbReference type="EMBL" id="ACNQ01000008">
    <property type="protein sequence ID" value="EEO77585.1"/>
    <property type="molecule type" value="Genomic_DNA"/>
</dbReference>
<dbReference type="RefSeq" id="WP_002212230.1">
    <property type="nucleotide sequence ID" value="NZ_ACNQ01000008.1"/>
</dbReference>
<dbReference type="SMR" id="Q1CKJ8"/>
<dbReference type="GeneID" id="57976026"/>
<dbReference type="KEGG" id="ypn:YPN_1152"/>
<dbReference type="HOGENOM" id="CLU_095954_0_0_6"/>
<dbReference type="Proteomes" id="UP000008936">
    <property type="component" value="Chromosome"/>
</dbReference>
<dbReference type="GO" id="GO:0005737">
    <property type="term" value="C:cytoplasm"/>
    <property type="evidence" value="ECO:0007669"/>
    <property type="project" value="UniProtKB-SubCell"/>
</dbReference>
<dbReference type="GO" id="GO:0016151">
    <property type="term" value="F:nickel cation binding"/>
    <property type="evidence" value="ECO:0007669"/>
    <property type="project" value="UniProtKB-UniRule"/>
</dbReference>
<dbReference type="GO" id="GO:0051082">
    <property type="term" value="F:unfolded protein binding"/>
    <property type="evidence" value="ECO:0007669"/>
    <property type="project" value="UniProtKB-UniRule"/>
</dbReference>
<dbReference type="GO" id="GO:0006457">
    <property type="term" value="P:protein folding"/>
    <property type="evidence" value="ECO:0007669"/>
    <property type="project" value="InterPro"/>
</dbReference>
<dbReference type="CDD" id="cd00571">
    <property type="entry name" value="UreE"/>
    <property type="match status" value="1"/>
</dbReference>
<dbReference type="Gene3D" id="2.60.260.20">
    <property type="entry name" value="Urease metallochaperone UreE, N-terminal domain"/>
    <property type="match status" value="1"/>
</dbReference>
<dbReference type="HAMAP" id="MF_00822">
    <property type="entry name" value="UreE"/>
    <property type="match status" value="1"/>
</dbReference>
<dbReference type="InterPro" id="IPR012406">
    <property type="entry name" value="UreE"/>
</dbReference>
<dbReference type="InterPro" id="IPR004029">
    <property type="entry name" value="UreE_N"/>
</dbReference>
<dbReference type="InterPro" id="IPR036118">
    <property type="entry name" value="UreE_N_sf"/>
</dbReference>
<dbReference type="NCBIfam" id="NF009761">
    <property type="entry name" value="PRK13262.1"/>
    <property type="match status" value="1"/>
</dbReference>
<dbReference type="Pfam" id="PF02814">
    <property type="entry name" value="UreE_N"/>
    <property type="match status" value="1"/>
</dbReference>
<dbReference type="SMART" id="SM00988">
    <property type="entry name" value="UreE_N"/>
    <property type="match status" value="1"/>
</dbReference>
<dbReference type="SUPFAM" id="SSF69287">
    <property type="entry name" value="Urease metallochaperone UreE, N-terminal domain"/>
    <property type="match status" value="1"/>
</dbReference>
<keyword id="KW-0143">Chaperone</keyword>
<keyword id="KW-0963">Cytoplasm</keyword>
<keyword id="KW-0533">Nickel</keyword>
<keyword id="KW-0996">Nickel insertion</keyword>
<sequence>MILIEHILGNVKKDPVWREKLKDATFDLLILDQREAQKSRCRKSSTQGLDLGISLDRNVVLADGDVLAWDEETNVAVVVQINLRDVMVIDLSELKSRSPDELIKTCFELGHALGNQHWKAVTKHNEVYVPLTVATTMMDSVMRTHGFQHLPFRFVKGAEILPLLTNSEARLLFGGAEDTDTHVHVASPLDEPHGSGLHIHGIHSHEEGHSHGDHDHDHSHSHGDHDHDHKH</sequence>
<organism>
    <name type="scientific">Yersinia pestis bv. Antiqua (strain Nepal516)</name>
    <dbReference type="NCBI Taxonomy" id="377628"/>
    <lineage>
        <taxon>Bacteria</taxon>
        <taxon>Pseudomonadati</taxon>
        <taxon>Pseudomonadota</taxon>
        <taxon>Gammaproteobacteria</taxon>
        <taxon>Enterobacterales</taxon>
        <taxon>Yersiniaceae</taxon>
        <taxon>Yersinia</taxon>
    </lineage>
</organism>
<reference key="1">
    <citation type="journal article" date="2006" name="J. Bacteriol.">
        <title>Complete genome sequence of Yersinia pestis strains Antiqua and Nepal516: evidence of gene reduction in an emerging pathogen.</title>
        <authorList>
            <person name="Chain P.S.G."/>
            <person name="Hu P."/>
            <person name="Malfatti S.A."/>
            <person name="Radnedge L."/>
            <person name="Larimer F."/>
            <person name="Vergez L.M."/>
            <person name="Worsham P."/>
            <person name="Chu M.C."/>
            <person name="Andersen G.L."/>
        </authorList>
    </citation>
    <scope>NUCLEOTIDE SEQUENCE [LARGE SCALE GENOMIC DNA]</scope>
    <source>
        <strain>Nepal516</strain>
    </source>
</reference>
<reference key="2">
    <citation type="submission" date="2009-04" db="EMBL/GenBank/DDBJ databases">
        <title>Yersinia pestis Nepal516A whole genome shotgun sequencing project.</title>
        <authorList>
            <person name="Plunkett G. III"/>
            <person name="Anderson B.D."/>
            <person name="Baumler D.J."/>
            <person name="Burland V."/>
            <person name="Cabot E.L."/>
            <person name="Glasner J.D."/>
            <person name="Mau B."/>
            <person name="Neeno-Eckwall E."/>
            <person name="Perna N.T."/>
            <person name="Munk A.C."/>
            <person name="Tapia R."/>
            <person name="Green L.D."/>
            <person name="Rogers Y.C."/>
            <person name="Detter J.C."/>
            <person name="Bruce D.C."/>
            <person name="Brettin T.S."/>
        </authorList>
    </citation>
    <scope>NUCLEOTIDE SEQUENCE [LARGE SCALE GENOMIC DNA]</scope>
    <source>
        <strain>Nepal516</strain>
    </source>
</reference>
<feature type="chain" id="PRO_1000062569" description="Urease accessory protein UreE">
    <location>
        <begin position="1"/>
        <end position="231"/>
    </location>
</feature>
<feature type="region of interest" description="Disordered" evidence="2">
    <location>
        <begin position="185"/>
        <end position="231"/>
    </location>
</feature>
<feature type="compositionally biased region" description="Basic and acidic residues" evidence="2">
    <location>
        <begin position="203"/>
        <end position="231"/>
    </location>
</feature>
<accession>Q1CKJ8</accession>
<accession>C4GR94</accession>